<feature type="chain" id="PRO_0000342940" description="Ribosomal RNA small subunit methyltransferase G">
    <location>
        <begin position="1"/>
        <end position="240"/>
    </location>
</feature>
<feature type="binding site" evidence="1">
    <location>
        <position position="80"/>
    </location>
    <ligand>
        <name>S-adenosyl-L-methionine</name>
        <dbReference type="ChEBI" id="CHEBI:59789"/>
    </ligand>
</feature>
<feature type="binding site" evidence="1">
    <location>
        <position position="85"/>
    </location>
    <ligand>
        <name>S-adenosyl-L-methionine</name>
        <dbReference type="ChEBI" id="CHEBI:59789"/>
    </ligand>
</feature>
<feature type="binding site" evidence="1">
    <location>
        <begin position="103"/>
        <end position="105"/>
    </location>
    <ligand>
        <name>S-adenosyl-L-methionine</name>
        <dbReference type="ChEBI" id="CHEBI:59789"/>
    </ligand>
</feature>
<feature type="binding site" evidence="1">
    <location>
        <begin position="131"/>
        <end position="132"/>
    </location>
    <ligand>
        <name>S-adenosyl-L-methionine</name>
        <dbReference type="ChEBI" id="CHEBI:59789"/>
    </ligand>
</feature>
<feature type="binding site" evidence="1">
    <location>
        <position position="150"/>
    </location>
    <ligand>
        <name>S-adenosyl-L-methionine</name>
        <dbReference type="ChEBI" id="CHEBI:59789"/>
    </ligand>
</feature>
<name>RSMG_THEPX</name>
<accession>B0K5N2</accession>
<organism>
    <name type="scientific">Thermoanaerobacter sp. (strain X514)</name>
    <dbReference type="NCBI Taxonomy" id="399726"/>
    <lineage>
        <taxon>Bacteria</taxon>
        <taxon>Bacillati</taxon>
        <taxon>Bacillota</taxon>
        <taxon>Clostridia</taxon>
        <taxon>Thermoanaerobacterales</taxon>
        <taxon>Thermoanaerobacteraceae</taxon>
        <taxon>Thermoanaerobacter</taxon>
    </lineage>
</organism>
<keyword id="KW-0963">Cytoplasm</keyword>
<keyword id="KW-0489">Methyltransferase</keyword>
<keyword id="KW-0698">rRNA processing</keyword>
<keyword id="KW-0949">S-adenosyl-L-methionine</keyword>
<keyword id="KW-0808">Transferase</keyword>
<dbReference type="EC" id="2.1.1.-" evidence="1"/>
<dbReference type="EMBL" id="CP000923">
    <property type="protein sequence ID" value="ABY93666.1"/>
    <property type="molecule type" value="Genomic_DNA"/>
</dbReference>
<dbReference type="RefSeq" id="WP_009052058.1">
    <property type="nucleotide sequence ID" value="NC_010320.1"/>
</dbReference>
<dbReference type="SMR" id="B0K5N2"/>
<dbReference type="KEGG" id="tex:Teth514_2407"/>
<dbReference type="HOGENOM" id="CLU_065341_0_0_9"/>
<dbReference type="Proteomes" id="UP000002155">
    <property type="component" value="Chromosome"/>
</dbReference>
<dbReference type="GO" id="GO:0005829">
    <property type="term" value="C:cytosol"/>
    <property type="evidence" value="ECO:0007669"/>
    <property type="project" value="TreeGrafter"/>
</dbReference>
<dbReference type="GO" id="GO:0070043">
    <property type="term" value="F:rRNA (guanine-N7-)-methyltransferase activity"/>
    <property type="evidence" value="ECO:0007669"/>
    <property type="project" value="UniProtKB-UniRule"/>
</dbReference>
<dbReference type="CDD" id="cd02440">
    <property type="entry name" value="AdoMet_MTases"/>
    <property type="match status" value="1"/>
</dbReference>
<dbReference type="FunFam" id="3.40.50.150:FF:000041">
    <property type="entry name" value="Ribosomal RNA small subunit methyltransferase G"/>
    <property type="match status" value="1"/>
</dbReference>
<dbReference type="Gene3D" id="3.40.50.150">
    <property type="entry name" value="Vaccinia Virus protein VP39"/>
    <property type="match status" value="1"/>
</dbReference>
<dbReference type="HAMAP" id="MF_00074">
    <property type="entry name" value="16SrRNA_methyltr_G"/>
    <property type="match status" value="1"/>
</dbReference>
<dbReference type="InterPro" id="IPR003682">
    <property type="entry name" value="rRNA_ssu_MeTfrase_G"/>
</dbReference>
<dbReference type="InterPro" id="IPR029063">
    <property type="entry name" value="SAM-dependent_MTases_sf"/>
</dbReference>
<dbReference type="NCBIfam" id="TIGR00138">
    <property type="entry name" value="rsmG_gidB"/>
    <property type="match status" value="1"/>
</dbReference>
<dbReference type="PANTHER" id="PTHR31760">
    <property type="entry name" value="S-ADENOSYL-L-METHIONINE-DEPENDENT METHYLTRANSFERASES SUPERFAMILY PROTEIN"/>
    <property type="match status" value="1"/>
</dbReference>
<dbReference type="PANTHER" id="PTHR31760:SF0">
    <property type="entry name" value="S-ADENOSYL-L-METHIONINE-DEPENDENT METHYLTRANSFERASES SUPERFAMILY PROTEIN"/>
    <property type="match status" value="1"/>
</dbReference>
<dbReference type="Pfam" id="PF02527">
    <property type="entry name" value="GidB"/>
    <property type="match status" value="1"/>
</dbReference>
<dbReference type="PIRSF" id="PIRSF003078">
    <property type="entry name" value="GidB"/>
    <property type="match status" value="1"/>
</dbReference>
<dbReference type="SUPFAM" id="SSF53335">
    <property type="entry name" value="S-adenosyl-L-methionine-dependent methyltransferases"/>
    <property type="match status" value="1"/>
</dbReference>
<reference key="1">
    <citation type="submission" date="2008-01" db="EMBL/GenBank/DDBJ databases">
        <title>Complete sequence of Thermoanaerobacter sp. X514.</title>
        <authorList>
            <consortium name="US DOE Joint Genome Institute"/>
            <person name="Copeland A."/>
            <person name="Lucas S."/>
            <person name="Lapidus A."/>
            <person name="Barry K."/>
            <person name="Glavina del Rio T."/>
            <person name="Dalin E."/>
            <person name="Tice H."/>
            <person name="Pitluck S."/>
            <person name="Bruce D."/>
            <person name="Goodwin L."/>
            <person name="Saunders E."/>
            <person name="Brettin T."/>
            <person name="Detter J.C."/>
            <person name="Han C."/>
            <person name="Schmutz J."/>
            <person name="Larimer F."/>
            <person name="Land M."/>
            <person name="Hauser L."/>
            <person name="Kyrpides N."/>
            <person name="Kim E."/>
            <person name="Hemme C."/>
            <person name="Fields M.W."/>
            <person name="He Z."/>
            <person name="Zhou J."/>
            <person name="Richardson P."/>
        </authorList>
    </citation>
    <scope>NUCLEOTIDE SEQUENCE [LARGE SCALE GENOMIC DNA]</scope>
    <source>
        <strain>X514</strain>
    </source>
</reference>
<evidence type="ECO:0000255" key="1">
    <source>
        <dbReference type="HAMAP-Rule" id="MF_00074"/>
    </source>
</evidence>
<gene>
    <name evidence="1" type="primary">rsmG</name>
    <name type="ordered locus">Teth514_2407</name>
</gene>
<protein>
    <recommendedName>
        <fullName evidence="1">Ribosomal RNA small subunit methyltransferase G</fullName>
        <ecNumber evidence="1">2.1.1.-</ecNumber>
    </recommendedName>
    <alternativeName>
        <fullName evidence="1">16S rRNA 7-methylguanosine methyltransferase</fullName>
        <shortName evidence="1">16S rRNA m7G methyltransferase</shortName>
    </alternativeName>
</protein>
<proteinExistence type="inferred from homology"/>
<sequence length="240" mass="27604">MKNKSVEMLIEGAKEWGIFLEMFHVEHFQKYYALLLEWNQKMNLTAITEESEVVIKHFLDSLSVVKSGKIKEEEKIIDVGTGAGFPCIPLKIVFPKLKATLLDSSKKRITFLEEVINKLGINEIELIHGRAEDIGKDIKYREQFDLSVARAVAPLNILLEYTLPFVKVDGYFIALKGREIEEEIENSQRALKELKGEIEEVKEIKLPYSDIVHHLVIIKKIDNCPTKYPRRANAIQRSPL</sequence>
<comment type="function">
    <text evidence="1">Specifically methylates the N7 position of a guanine in 16S rRNA.</text>
</comment>
<comment type="subcellular location">
    <subcellularLocation>
        <location evidence="1">Cytoplasm</location>
    </subcellularLocation>
</comment>
<comment type="similarity">
    <text evidence="1">Belongs to the methyltransferase superfamily. RNA methyltransferase RsmG family.</text>
</comment>